<evidence type="ECO:0000255" key="1">
    <source>
        <dbReference type="HAMAP-Rule" id="MF_01013"/>
    </source>
</evidence>
<gene>
    <name evidence="1" type="primary">hisF</name>
    <name type="ordered locus">sync_0698</name>
</gene>
<keyword id="KW-0028">Amino-acid biosynthesis</keyword>
<keyword id="KW-0963">Cytoplasm</keyword>
<keyword id="KW-0368">Histidine biosynthesis</keyword>
<keyword id="KW-0456">Lyase</keyword>
<keyword id="KW-1185">Reference proteome</keyword>
<organism>
    <name type="scientific">Synechococcus sp. (strain CC9311)</name>
    <dbReference type="NCBI Taxonomy" id="64471"/>
    <lineage>
        <taxon>Bacteria</taxon>
        <taxon>Bacillati</taxon>
        <taxon>Cyanobacteriota</taxon>
        <taxon>Cyanophyceae</taxon>
        <taxon>Synechococcales</taxon>
        <taxon>Synechococcaceae</taxon>
        <taxon>Synechococcus</taxon>
    </lineage>
</organism>
<accession>Q0ICA6</accession>
<dbReference type="EC" id="4.3.2.10" evidence="1"/>
<dbReference type="EMBL" id="CP000435">
    <property type="protein sequence ID" value="ABI46683.1"/>
    <property type="molecule type" value="Genomic_DNA"/>
</dbReference>
<dbReference type="RefSeq" id="WP_011618643.1">
    <property type="nucleotide sequence ID" value="NC_008319.1"/>
</dbReference>
<dbReference type="SMR" id="Q0ICA6"/>
<dbReference type="STRING" id="64471.sync_0698"/>
<dbReference type="KEGG" id="syg:sync_0698"/>
<dbReference type="eggNOG" id="COG0107">
    <property type="taxonomic scope" value="Bacteria"/>
</dbReference>
<dbReference type="HOGENOM" id="CLU_048577_4_0_3"/>
<dbReference type="OrthoDB" id="9781903at2"/>
<dbReference type="UniPathway" id="UPA00031">
    <property type="reaction ID" value="UER00010"/>
</dbReference>
<dbReference type="Proteomes" id="UP000001961">
    <property type="component" value="Chromosome"/>
</dbReference>
<dbReference type="GO" id="GO:0005737">
    <property type="term" value="C:cytoplasm"/>
    <property type="evidence" value="ECO:0007669"/>
    <property type="project" value="UniProtKB-SubCell"/>
</dbReference>
<dbReference type="GO" id="GO:0000107">
    <property type="term" value="F:imidazoleglycerol-phosphate synthase activity"/>
    <property type="evidence" value="ECO:0007669"/>
    <property type="project" value="UniProtKB-UniRule"/>
</dbReference>
<dbReference type="GO" id="GO:0016829">
    <property type="term" value="F:lyase activity"/>
    <property type="evidence" value="ECO:0007669"/>
    <property type="project" value="UniProtKB-KW"/>
</dbReference>
<dbReference type="GO" id="GO:0000105">
    <property type="term" value="P:L-histidine biosynthetic process"/>
    <property type="evidence" value="ECO:0007669"/>
    <property type="project" value="UniProtKB-UniRule"/>
</dbReference>
<dbReference type="CDD" id="cd04731">
    <property type="entry name" value="HisF"/>
    <property type="match status" value="1"/>
</dbReference>
<dbReference type="Gene3D" id="3.20.20.70">
    <property type="entry name" value="Aldolase class I"/>
    <property type="match status" value="1"/>
</dbReference>
<dbReference type="HAMAP" id="MF_01013">
    <property type="entry name" value="HisF"/>
    <property type="match status" value="1"/>
</dbReference>
<dbReference type="InterPro" id="IPR013785">
    <property type="entry name" value="Aldolase_TIM"/>
</dbReference>
<dbReference type="InterPro" id="IPR006062">
    <property type="entry name" value="His_biosynth"/>
</dbReference>
<dbReference type="InterPro" id="IPR004651">
    <property type="entry name" value="HisF"/>
</dbReference>
<dbReference type="InterPro" id="IPR050064">
    <property type="entry name" value="IGPS_HisA/HisF"/>
</dbReference>
<dbReference type="InterPro" id="IPR011060">
    <property type="entry name" value="RibuloseP-bd_barrel"/>
</dbReference>
<dbReference type="NCBIfam" id="TIGR00735">
    <property type="entry name" value="hisF"/>
    <property type="match status" value="1"/>
</dbReference>
<dbReference type="PANTHER" id="PTHR21235:SF2">
    <property type="entry name" value="IMIDAZOLE GLYCEROL PHOSPHATE SYNTHASE HISHF"/>
    <property type="match status" value="1"/>
</dbReference>
<dbReference type="PANTHER" id="PTHR21235">
    <property type="entry name" value="IMIDAZOLE GLYCEROL PHOSPHATE SYNTHASE SUBUNIT HISF/H IGP SYNTHASE SUBUNIT HISF/H"/>
    <property type="match status" value="1"/>
</dbReference>
<dbReference type="Pfam" id="PF00977">
    <property type="entry name" value="His_biosynth"/>
    <property type="match status" value="1"/>
</dbReference>
<dbReference type="SUPFAM" id="SSF51366">
    <property type="entry name" value="Ribulose-phoshate binding barrel"/>
    <property type="match status" value="1"/>
</dbReference>
<comment type="function">
    <text evidence="1">IGPS catalyzes the conversion of PRFAR and glutamine to IGP, AICAR and glutamate. The HisF subunit catalyzes the cyclization activity that produces IGP and AICAR from PRFAR using the ammonia provided by the HisH subunit.</text>
</comment>
<comment type="catalytic activity">
    <reaction evidence="1">
        <text>5-[(5-phospho-1-deoxy-D-ribulos-1-ylimino)methylamino]-1-(5-phospho-beta-D-ribosyl)imidazole-4-carboxamide + L-glutamine = D-erythro-1-(imidazol-4-yl)glycerol 3-phosphate + 5-amino-1-(5-phospho-beta-D-ribosyl)imidazole-4-carboxamide + L-glutamate + H(+)</text>
        <dbReference type="Rhea" id="RHEA:24793"/>
        <dbReference type="ChEBI" id="CHEBI:15378"/>
        <dbReference type="ChEBI" id="CHEBI:29985"/>
        <dbReference type="ChEBI" id="CHEBI:58278"/>
        <dbReference type="ChEBI" id="CHEBI:58359"/>
        <dbReference type="ChEBI" id="CHEBI:58475"/>
        <dbReference type="ChEBI" id="CHEBI:58525"/>
        <dbReference type="EC" id="4.3.2.10"/>
    </reaction>
</comment>
<comment type="pathway">
    <text evidence="1">Amino-acid biosynthesis; L-histidine biosynthesis; L-histidine from 5-phospho-alpha-D-ribose 1-diphosphate: step 5/9.</text>
</comment>
<comment type="subunit">
    <text evidence="1">Heterodimer of HisH and HisF.</text>
</comment>
<comment type="subcellular location">
    <subcellularLocation>
        <location evidence="1">Cytoplasm</location>
    </subcellularLocation>
</comment>
<comment type="similarity">
    <text evidence="1">Belongs to the HisA/HisF family.</text>
</comment>
<feature type="chain" id="PRO_1000063164" description="Imidazole glycerol phosphate synthase subunit HisF">
    <location>
        <begin position="1"/>
        <end position="263"/>
    </location>
</feature>
<feature type="active site" evidence="1">
    <location>
        <position position="11"/>
    </location>
</feature>
<feature type="active site" evidence="1">
    <location>
        <position position="130"/>
    </location>
</feature>
<name>HIS6_SYNS3</name>
<reference key="1">
    <citation type="journal article" date="2006" name="Proc. Natl. Acad. Sci. U.S.A.">
        <title>Genome sequence of Synechococcus CC9311: insights into adaptation to a coastal environment.</title>
        <authorList>
            <person name="Palenik B."/>
            <person name="Ren Q."/>
            <person name="Dupont C.L."/>
            <person name="Myers G.S."/>
            <person name="Heidelberg J.F."/>
            <person name="Badger J.H."/>
            <person name="Madupu R."/>
            <person name="Nelson W.C."/>
            <person name="Brinkac L.M."/>
            <person name="Dodson R.J."/>
            <person name="Durkin A.S."/>
            <person name="Daugherty S.C."/>
            <person name="Sullivan S.A."/>
            <person name="Khouri H."/>
            <person name="Mohamoud Y."/>
            <person name="Halpin R."/>
            <person name="Paulsen I.T."/>
        </authorList>
    </citation>
    <scope>NUCLEOTIDE SEQUENCE [LARGE SCALE GENOMIC DNA]</scope>
    <source>
        <strain>CC9311</strain>
    </source>
</reference>
<sequence>MVALRLIPCLDVAKGRVVKGVNFVGLRDAGDPVELACRYSEAGADELVFLDIAASHEGRATLVDLVRRTAASVTIPFTVGGGIASVEGITELLRAGADKVSLNSSAVRRPELVSEGAERFGCQCIVVAIDARRRPGGGWDVYVKGGRENTGLDAVDWARRVAALGAGEILLTSMDGDGTQAGYDLALTRAVAQAVAVPVIASGGAGCMDHIAAALDSGPEGGQASAALLASLLHDGVLSVEQIKLDLQGRGLLIRPLEPESES</sequence>
<proteinExistence type="inferred from homology"/>
<protein>
    <recommendedName>
        <fullName evidence="1">Imidazole glycerol phosphate synthase subunit HisF</fullName>
        <ecNumber evidence="1">4.3.2.10</ecNumber>
    </recommendedName>
    <alternativeName>
        <fullName evidence="1">IGP synthase cyclase subunit</fullName>
    </alternativeName>
    <alternativeName>
        <fullName evidence="1">IGP synthase subunit HisF</fullName>
    </alternativeName>
    <alternativeName>
        <fullName evidence="1">ImGP synthase subunit HisF</fullName>
        <shortName evidence="1">IGPS subunit HisF</shortName>
    </alternativeName>
</protein>